<comment type="function">
    <text evidence="4">May have a specific role in modifying the cell-wall structure, specifically during seed germination, thus facilitating radicle protrusion.</text>
</comment>
<comment type="subcellular location">
    <subcellularLocation>
        <location evidence="1">Secreted</location>
        <location evidence="1">Primary cell wall</location>
    </subcellularLocation>
</comment>
<comment type="tissue specificity">
    <text evidence="4">Specifically expressed in endosperm during seed germination, at the site of radicle protrusion.</text>
</comment>
<comment type="induction">
    <text evidence="4">Under positive control of gibberellic acid.</text>
</comment>
<comment type="similarity">
    <text evidence="5">Belongs to the extensin family.</text>
</comment>
<sequence>MRVPLIDFLRFLVLILSLSGASVAADATVKQNFNKYETDSGHAHPPPIYGAPPSYTTPPPPIYSPPIYPPPIQKPPTYSPPIYPPPIQKPPTPTYSPPIYPPPIQKPPTPTYSPPIYPPPIQKPPTPTYSPPIYPPPIQKPPTPSYSPPVKPPPVQMPPTPTYSPPIKPPPVHKPPTPTYSPPIKPPVHKPPTPIYSPPIKPPPVHKPPTPIYSPPIKPPPVHKPPTPTYSPPVKPPPVHKPPTPIYSPPIKPPPVHKPPTPIYSPPVKPPPVQTPPTPIYSPPVKPPPVHKPPTPTYSPPVKSPPVQKPPTPTYSPPIKPPPVQKPPTPTYSPPIKPPPVKPPTPIYSPPVKPPPVHKPPTPIYSPPVKPPPVHKPPTPIYSPPVKPPPIQKPPTPTYSPPIKPPPLQKPPTPTYSPPIKLPPVKPPTPIYSPPVKPPPVHKPPTPIYSPPVKPPPVHKPPTPTYSPPIKPPPVKPPTPTYSPPVQPPPVQKPPTPTYSPPVKPPPIQKPPTPTYSPPIKPPPVKPPTPTYSPPIKPPPVHKPPTPTYSPPIKPPPIHKPPTPTYSPPIKPPPVHKPPTPTYSPPIKPPPVHKPPTPTYSPPIKPPPVHKPPTPTYSPPIKPPPVHKPPTPTYSPPIKPPPVHKPPTPTYSPPIKPPPVQKPPTPTYSPPVKPPPVQLPPTPTYSPPVKPPPVQVPPTPTYSPPVKPPPVQVPPTPTYSPPIKPPPVQVPPTPTTPSPPQGGYGTPPPYAYLSHPIDIRN</sequence>
<protein>
    <recommendedName>
        <fullName>Proline-rich extensin-like protein EPR1</fullName>
    </recommendedName>
    <alternativeName>
        <fullName>Protein EXTENSIN PROLINE-RICH 1</fullName>
    </alternativeName>
</protein>
<keyword id="KW-0134">Cell wall</keyword>
<keyword id="KW-0961">Cell wall biogenesis/degradation</keyword>
<keyword id="KW-1185">Reference proteome</keyword>
<keyword id="KW-0677">Repeat</keyword>
<keyword id="KW-0964">Secreted</keyword>
<keyword id="KW-0732">Signal</keyword>
<proteinExistence type="evidence at transcript level"/>
<name>EPR1_ARATH</name>
<dbReference type="EMBL" id="AC006232">
    <property type="protein sequence ID" value="AAM15181.1"/>
    <property type="molecule type" value="Genomic_DNA"/>
</dbReference>
<dbReference type="EMBL" id="AC006233">
    <property type="protein sequence ID" value="AAD41992.1"/>
    <property type="molecule type" value="Genomic_DNA"/>
</dbReference>
<dbReference type="EMBL" id="CP002685">
    <property type="protein sequence ID" value="AEC07987.1"/>
    <property type="molecule type" value="Genomic_DNA"/>
</dbReference>
<dbReference type="PIR" id="C84672">
    <property type="entry name" value="C84672"/>
</dbReference>
<dbReference type="RefSeq" id="NP_180307.1">
    <property type="nucleotide sequence ID" value="NM_128298.2"/>
</dbReference>
<dbReference type="SMR" id="Q9ZQI0"/>
<dbReference type="STRING" id="3702.Q9ZQI0"/>
<dbReference type="GlyGen" id="Q9ZQI0">
    <property type="glycosylation" value="7 sites"/>
</dbReference>
<dbReference type="PaxDb" id="3702-AT2G27380.1"/>
<dbReference type="EnsemblPlants" id="AT2G27380.1">
    <property type="protein sequence ID" value="AT2G27380.1"/>
    <property type="gene ID" value="AT2G27380"/>
</dbReference>
<dbReference type="GeneID" id="817282"/>
<dbReference type="Gramene" id="AT2G27380.1">
    <property type="protein sequence ID" value="AT2G27380.1"/>
    <property type="gene ID" value="AT2G27380"/>
</dbReference>
<dbReference type="KEGG" id="ath:AT2G27380"/>
<dbReference type="Araport" id="AT2G27380"/>
<dbReference type="TAIR" id="AT2G27380">
    <property type="gene designation" value="EPR1"/>
</dbReference>
<dbReference type="HOGENOM" id="CLU_021129_0_0_1"/>
<dbReference type="InParanoid" id="Q9ZQI0"/>
<dbReference type="OMA" id="ASPPVQW"/>
<dbReference type="PRO" id="PR:Q9ZQI0"/>
<dbReference type="Proteomes" id="UP000006548">
    <property type="component" value="Chromosome 2"/>
</dbReference>
<dbReference type="ExpressionAtlas" id="Q9ZQI0">
    <property type="expression patterns" value="baseline and differential"/>
</dbReference>
<dbReference type="GO" id="GO:0005576">
    <property type="term" value="C:extracellular region"/>
    <property type="evidence" value="ECO:0007669"/>
    <property type="project" value="UniProtKB-KW"/>
</dbReference>
<dbReference type="GO" id="GO:0009530">
    <property type="term" value="C:primary cell wall"/>
    <property type="evidence" value="ECO:0007669"/>
    <property type="project" value="UniProtKB-SubCell"/>
</dbReference>
<dbReference type="GO" id="GO:0005199">
    <property type="term" value="F:structural constituent of cell wall"/>
    <property type="evidence" value="ECO:0000304"/>
    <property type="project" value="TAIR"/>
</dbReference>
<dbReference type="GO" id="GO:0009827">
    <property type="term" value="P:plant-type cell wall modification"/>
    <property type="evidence" value="ECO:0000304"/>
    <property type="project" value="TAIR"/>
</dbReference>
<dbReference type="GO" id="GO:0009845">
    <property type="term" value="P:seed germination"/>
    <property type="evidence" value="ECO:0000304"/>
    <property type="project" value="TAIR"/>
</dbReference>
<dbReference type="InterPro" id="IPR051308">
    <property type="entry name" value="Proline-rich_CW_protein"/>
</dbReference>
<dbReference type="PANTHER" id="PTHR34629">
    <property type="entry name" value="PROLINE-RICH EXTENSIN-LIKE PROTEIN EPR1"/>
    <property type="match status" value="1"/>
</dbReference>
<dbReference type="PANTHER" id="PTHR34629:SF1">
    <property type="entry name" value="PROLINE-RICH EXTENSIN-LIKE PROTEIN EPR1"/>
    <property type="match status" value="1"/>
</dbReference>
<dbReference type="PRINTS" id="PR01217">
    <property type="entry name" value="PRICHEXTENSN"/>
</dbReference>
<reference key="1">
    <citation type="journal article" date="1999" name="Nature">
        <title>Sequence and analysis of chromosome 2 of the plant Arabidopsis thaliana.</title>
        <authorList>
            <person name="Lin X."/>
            <person name="Kaul S."/>
            <person name="Rounsley S.D."/>
            <person name="Shea T.P."/>
            <person name="Benito M.-I."/>
            <person name="Town C.D."/>
            <person name="Fujii C.Y."/>
            <person name="Mason T.M."/>
            <person name="Bowman C.L."/>
            <person name="Barnstead M.E."/>
            <person name="Feldblyum T.V."/>
            <person name="Buell C.R."/>
            <person name="Ketchum K.A."/>
            <person name="Lee J.J."/>
            <person name="Ronning C.M."/>
            <person name="Koo H.L."/>
            <person name="Moffat K.S."/>
            <person name="Cronin L.A."/>
            <person name="Shen M."/>
            <person name="Pai G."/>
            <person name="Van Aken S."/>
            <person name="Umayam L."/>
            <person name="Tallon L.J."/>
            <person name="Gill J.E."/>
            <person name="Adams M.D."/>
            <person name="Carrera A.J."/>
            <person name="Creasy T.H."/>
            <person name="Goodman H.M."/>
            <person name="Somerville C.R."/>
            <person name="Copenhaver G.P."/>
            <person name="Preuss D."/>
            <person name="Nierman W.C."/>
            <person name="White O."/>
            <person name="Eisen J.A."/>
            <person name="Salzberg S.L."/>
            <person name="Fraser C.M."/>
            <person name="Venter J.C."/>
        </authorList>
    </citation>
    <scope>NUCLEOTIDE SEQUENCE [LARGE SCALE GENOMIC DNA]</scope>
    <source>
        <strain>cv. Columbia</strain>
    </source>
</reference>
<reference key="2">
    <citation type="journal article" date="2017" name="Plant J.">
        <title>Araport11: a complete reannotation of the Arabidopsis thaliana reference genome.</title>
        <authorList>
            <person name="Cheng C.Y."/>
            <person name="Krishnakumar V."/>
            <person name="Chan A.P."/>
            <person name="Thibaud-Nissen F."/>
            <person name="Schobel S."/>
            <person name="Town C.D."/>
        </authorList>
    </citation>
    <scope>GENOME REANNOTATION</scope>
    <source>
        <strain>cv. Columbia</strain>
    </source>
</reference>
<reference key="3">
    <citation type="journal article" date="2000" name="Plant J.">
        <title>The Arabidopsis AtEPR1 extensin-like gene is specifically expressed in endosperm during seed germination.</title>
        <authorList>
            <person name="Dubreucq B."/>
            <person name="Berger N."/>
            <person name="Vincent E."/>
            <person name="Boisson M."/>
            <person name="Pelletier G."/>
            <person name="Caboche M."/>
            <person name="Lepiniec L."/>
        </authorList>
    </citation>
    <scope>FUNCTION</scope>
    <scope>TISSUE SPECIFICITY</scope>
    <scope>INDUCTION</scope>
</reference>
<gene>
    <name type="primary">EPR1</name>
    <name type="ordered locus">At2g27380</name>
    <name type="ORF">F10A12</name>
    <name type="ORF">F12K2.4</name>
</gene>
<feature type="signal peptide" evidence="2">
    <location>
        <begin position="1"/>
        <end position="24"/>
    </location>
</feature>
<feature type="chain" id="PRO_0000397877" description="Proline-rich extensin-like protein EPR1">
    <location>
        <begin position="25"/>
        <end position="761"/>
    </location>
</feature>
<feature type="repeat" description="1; degenerate">
    <location>
        <begin position="63"/>
        <end position="77"/>
    </location>
</feature>
<feature type="repeat" description="2">
    <location>
        <begin position="78"/>
        <end position="94"/>
    </location>
</feature>
<feature type="repeat" description="3">
    <location>
        <begin position="95"/>
        <end position="111"/>
    </location>
</feature>
<feature type="repeat" description="4">
    <location>
        <begin position="112"/>
        <end position="128"/>
    </location>
</feature>
<feature type="repeat" description="5">
    <location>
        <begin position="129"/>
        <end position="145"/>
    </location>
</feature>
<feature type="repeat" description="6">
    <location>
        <begin position="146"/>
        <end position="162"/>
    </location>
</feature>
<feature type="repeat" description="7">
    <location>
        <begin position="163"/>
        <end position="179"/>
    </location>
</feature>
<feature type="repeat" description="8">
    <location>
        <begin position="180"/>
        <end position="195"/>
    </location>
</feature>
<feature type="repeat" description="9">
    <location>
        <begin position="196"/>
        <end position="212"/>
    </location>
</feature>
<feature type="repeat" description="10">
    <location>
        <begin position="213"/>
        <end position="229"/>
    </location>
</feature>
<feature type="repeat" description="11">
    <location>
        <begin position="230"/>
        <end position="246"/>
    </location>
</feature>
<feature type="repeat" description="12">
    <location>
        <begin position="247"/>
        <end position="263"/>
    </location>
</feature>
<feature type="repeat" description="13">
    <location>
        <begin position="264"/>
        <end position="280"/>
    </location>
</feature>
<feature type="repeat" description="14">
    <location>
        <begin position="281"/>
        <end position="297"/>
    </location>
</feature>
<feature type="repeat" description="15">
    <location>
        <begin position="298"/>
        <end position="314"/>
    </location>
</feature>
<feature type="repeat" description="16">
    <location>
        <begin position="315"/>
        <end position="331"/>
    </location>
</feature>
<feature type="repeat" description="17">
    <location>
        <begin position="332"/>
        <end position="347"/>
    </location>
</feature>
<feature type="repeat" description="18">
    <location>
        <begin position="348"/>
        <end position="364"/>
    </location>
</feature>
<feature type="repeat" description="19">
    <location>
        <begin position="365"/>
        <end position="381"/>
    </location>
</feature>
<feature type="repeat" description="20">
    <location>
        <begin position="382"/>
        <end position="398"/>
    </location>
</feature>
<feature type="repeat" description="21">
    <location>
        <begin position="399"/>
        <end position="415"/>
    </location>
</feature>
<feature type="repeat" description="22">
    <location>
        <begin position="416"/>
        <end position="431"/>
    </location>
</feature>
<feature type="repeat" description="23">
    <location>
        <begin position="432"/>
        <end position="448"/>
    </location>
</feature>
<feature type="repeat" description="24">
    <location>
        <begin position="449"/>
        <end position="465"/>
    </location>
</feature>
<feature type="repeat" description="25">
    <location>
        <begin position="466"/>
        <end position="481"/>
    </location>
</feature>
<feature type="repeat" description="26">
    <location>
        <begin position="482"/>
        <end position="498"/>
    </location>
</feature>
<feature type="repeat" description="27">
    <location>
        <begin position="499"/>
        <end position="515"/>
    </location>
</feature>
<feature type="repeat" description="28">
    <location>
        <begin position="516"/>
        <end position="531"/>
    </location>
</feature>
<feature type="repeat" description="29">
    <location>
        <begin position="532"/>
        <end position="548"/>
    </location>
</feature>
<feature type="repeat" description="30">
    <location>
        <begin position="549"/>
        <end position="565"/>
    </location>
</feature>
<feature type="repeat" description="31">
    <location>
        <begin position="566"/>
        <end position="582"/>
    </location>
</feature>
<feature type="repeat" description="32">
    <location>
        <begin position="583"/>
        <end position="599"/>
    </location>
</feature>
<feature type="repeat" description="33">
    <location>
        <begin position="600"/>
        <end position="616"/>
    </location>
</feature>
<feature type="repeat" description="34">
    <location>
        <begin position="617"/>
        <end position="633"/>
    </location>
</feature>
<feature type="repeat" description="35">
    <location>
        <begin position="634"/>
        <end position="650"/>
    </location>
</feature>
<feature type="repeat" description="36">
    <location>
        <begin position="651"/>
        <end position="667"/>
    </location>
</feature>
<feature type="repeat" description="37">
    <location>
        <begin position="668"/>
        <end position="684"/>
    </location>
</feature>
<feature type="repeat" description="38">
    <location>
        <begin position="685"/>
        <end position="701"/>
    </location>
</feature>
<feature type="repeat" description="39">
    <location>
        <begin position="702"/>
        <end position="718"/>
    </location>
</feature>
<feature type="repeat" description="40">
    <location>
        <begin position="719"/>
        <end position="735"/>
    </location>
</feature>
<feature type="region of interest" description="40 X 17 AA approximate tandem repeats of Y-S-P-P-[IV]-[KY]-P-P-P-x(1,2)-K-P-P-T-P-T">
    <location>
        <begin position="63"/>
        <end position="735"/>
    </location>
</feature>
<feature type="region of interest" description="Disordered" evidence="3">
    <location>
        <begin position="111"/>
        <end position="761"/>
    </location>
</feature>
<feature type="compositionally biased region" description="Pro residues" evidence="3">
    <location>
        <begin position="111"/>
        <end position="750"/>
    </location>
</feature>
<organism>
    <name type="scientific">Arabidopsis thaliana</name>
    <name type="common">Mouse-ear cress</name>
    <dbReference type="NCBI Taxonomy" id="3702"/>
    <lineage>
        <taxon>Eukaryota</taxon>
        <taxon>Viridiplantae</taxon>
        <taxon>Streptophyta</taxon>
        <taxon>Embryophyta</taxon>
        <taxon>Tracheophyta</taxon>
        <taxon>Spermatophyta</taxon>
        <taxon>Magnoliopsida</taxon>
        <taxon>eudicotyledons</taxon>
        <taxon>Gunneridae</taxon>
        <taxon>Pentapetalae</taxon>
        <taxon>rosids</taxon>
        <taxon>malvids</taxon>
        <taxon>Brassicales</taxon>
        <taxon>Brassicaceae</taxon>
        <taxon>Camelineae</taxon>
        <taxon>Arabidopsis</taxon>
    </lineage>
</organism>
<evidence type="ECO:0000250" key="1"/>
<evidence type="ECO:0000255" key="2"/>
<evidence type="ECO:0000256" key="3">
    <source>
        <dbReference type="SAM" id="MobiDB-lite"/>
    </source>
</evidence>
<evidence type="ECO:0000269" key="4">
    <source>
    </source>
</evidence>
<evidence type="ECO:0000305" key="5"/>
<accession>Q9ZQI0</accession>